<proteinExistence type="evidence at protein level"/>
<protein>
    <recommendedName>
        <fullName evidence="9">4,4'-diapophytoene synthase</fullName>
        <shortName evidence="9">DAP synthase</shortName>
        <ecNumber evidence="2 6">2.5.1.96</ecNumber>
    </recommendedName>
    <alternativeName>
        <fullName evidence="8">C30 carotenoid synthase</fullName>
    </alternativeName>
    <alternativeName>
        <fullName evidence="8">Dehydrosqualene synthase</fullName>
    </alternativeName>
</protein>
<keyword id="KW-0125">Carotenoid biosynthesis</keyword>
<keyword id="KW-0460">Magnesium</keyword>
<keyword id="KW-0479">Metal-binding</keyword>
<keyword id="KW-1185">Reference proteome</keyword>
<keyword id="KW-0808">Transferase</keyword>
<keyword id="KW-0843">Virulence</keyword>
<gene>
    <name evidence="8" type="primary">crtM</name>
    <name type="ordered locus">SAOUHSC_02879</name>
</gene>
<reference key="1">
    <citation type="book" date="2006" name="Gram positive pathogens, 2nd edition">
        <title>The Staphylococcus aureus NCTC 8325 genome.</title>
        <editorList>
            <person name="Fischetti V."/>
            <person name="Novick R."/>
            <person name="Ferretti J."/>
            <person name="Portnoy D."/>
            <person name="Rood J."/>
        </editorList>
        <authorList>
            <person name="Gillaspy A.F."/>
            <person name="Worrell V."/>
            <person name="Orvis J."/>
            <person name="Roe B.A."/>
            <person name="Dyer D.W."/>
            <person name="Iandolo J.J."/>
        </authorList>
    </citation>
    <scope>NUCLEOTIDE SEQUENCE [LARGE SCALE GENOMIC DNA]</scope>
    <source>
        <strain>NCTC 8325 / PS 47</strain>
    </source>
</reference>
<reference key="2">
    <citation type="journal article" date="2002" name="J. Bacteriol.">
        <title>Evolution of the C(30) carotenoid synthase crtM for function in a C(40) pathway.</title>
        <authorList>
            <person name="Umeno D."/>
            <person name="Tobias A.V."/>
            <person name="Arnold F.H."/>
        </authorList>
    </citation>
    <scope>FUNCTION</scope>
    <scope>CATALYTIC ACTIVITY</scope>
    <scope>SUBSTRATE SPECIFICITY</scope>
    <scope>MUTAGENESIS OF PHE-26</scope>
</reference>
<reference key="3">
    <citation type="journal article" date="2003" name="Appl. Environ. Microbiol.">
        <title>A C(35) carotenoid biosynthetic pathway.</title>
        <authorList>
            <person name="Umeno D."/>
            <person name="Arnold F.H."/>
        </authorList>
    </citation>
    <scope>SUBSTRATE SPECIFICITY</scope>
</reference>
<reference key="4">
    <citation type="journal article" date="2003" name="Nucleic Acids Res.">
        <title>Method to protect a targeted amino acid residue during random mutagenesis.</title>
        <authorList>
            <person name="Umeno D."/>
            <person name="Hiraga K."/>
            <person name="Arnold F.H."/>
        </authorList>
    </citation>
    <scope>MUTAGENESIS OF TRP-38 AND GLU-180</scope>
</reference>
<reference key="5">
    <citation type="journal article" date="2004" name="J. Bacteriol.">
        <title>Evolution of a pathway to novel long-chain carotenoids.</title>
        <authorList>
            <person name="Umeno D."/>
            <person name="Arnold F.H."/>
        </authorList>
    </citation>
    <scope>MUTAGENESIS OF PHE-26; TRP-38 AND GLU-180</scope>
</reference>
<reference key="6">
    <citation type="journal article" date="2005" name="Appl. Environ. Microbiol.">
        <title>Preparation, characterization, and optimization of an in vitro C(30) carotenoid pathway.</title>
        <authorList>
            <person name="Ku B."/>
            <person name="Jeong J.-C."/>
            <person name="Mijts B.N."/>
            <person name="Schmidt-Dannert C."/>
            <person name="Dordick J.S."/>
        </authorList>
    </citation>
    <scope>FUNCTION</scope>
    <scope>CATALYTIC ACTIVITY</scope>
    <scope>BIOPHYSICOCHEMICAL PROPERTIES</scope>
</reference>
<reference key="7">
    <citation type="journal article" date="2012" name="J. Biol. Chem.">
        <title>Functional expression and extension of staphylococcal staphyloxanthin biosynthetic pathway in Escherichia coli.</title>
        <authorList>
            <person name="Kim S.H."/>
            <person name="Lee P.C."/>
        </authorList>
    </citation>
    <scope>FUNCTION</scope>
    <scope>PATHWAY</scope>
    <source>
        <strain>KCTC 1928</strain>
    </source>
</reference>
<dbReference type="EC" id="2.5.1.96" evidence="2 6"/>
<dbReference type="EMBL" id="CP000253">
    <property type="protein sequence ID" value="ABD31876.1"/>
    <property type="molecule type" value="Genomic_DNA"/>
</dbReference>
<dbReference type="RefSeq" id="WP_000178307.1">
    <property type="nucleotide sequence ID" value="NZ_LS483365.1"/>
</dbReference>
<dbReference type="RefSeq" id="YP_501333.1">
    <property type="nucleotide sequence ID" value="NC_007795.1"/>
</dbReference>
<dbReference type="SMR" id="Q2FV59"/>
<dbReference type="STRING" id="93061.SAOUHSC_02879"/>
<dbReference type="PaxDb" id="1280-SAXN108_2813"/>
<dbReference type="GeneID" id="3921549"/>
<dbReference type="KEGG" id="sao:SAOUHSC_02879"/>
<dbReference type="PATRIC" id="fig|93061.5.peg.2602"/>
<dbReference type="eggNOG" id="COG1562">
    <property type="taxonomic scope" value="Bacteria"/>
</dbReference>
<dbReference type="HOGENOM" id="CLU_037269_1_3_9"/>
<dbReference type="OrthoDB" id="9787280at2"/>
<dbReference type="SABIO-RK" id="Q2FV59"/>
<dbReference type="UniPathway" id="UPA00029">
    <property type="reaction ID" value="UER00556"/>
</dbReference>
<dbReference type="PRO" id="PR:Q2FV59"/>
<dbReference type="Proteomes" id="UP000008816">
    <property type="component" value="Chromosome"/>
</dbReference>
<dbReference type="GO" id="GO:0046905">
    <property type="term" value="F:15-cis-phytoene synthase activity"/>
    <property type="evidence" value="ECO:0000318"/>
    <property type="project" value="GO_Central"/>
</dbReference>
<dbReference type="GO" id="GO:0004311">
    <property type="term" value="F:geranylgeranyl diphosphate synthase activity"/>
    <property type="evidence" value="ECO:0007669"/>
    <property type="project" value="InterPro"/>
</dbReference>
<dbReference type="GO" id="GO:0046872">
    <property type="term" value="F:metal ion binding"/>
    <property type="evidence" value="ECO:0007669"/>
    <property type="project" value="UniProtKB-KW"/>
</dbReference>
<dbReference type="GO" id="GO:0051996">
    <property type="term" value="F:squalene synthase [NAD(P)H] activity"/>
    <property type="evidence" value="ECO:0007669"/>
    <property type="project" value="InterPro"/>
</dbReference>
<dbReference type="GO" id="GO:0016117">
    <property type="term" value="P:carotenoid biosynthetic process"/>
    <property type="evidence" value="ECO:0007669"/>
    <property type="project" value="UniProtKB-KW"/>
</dbReference>
<dbReference type="CDD" id="cd00683">
    <property type="entry name" value="Trans_IPPS_HH"/>
    <property type="match status" value="1"/>
</dbReference>
<dbReference type="FunFam" id="1.10.600.10:FF:000028">
    <property type="entry name" value="Dehydrosqualene synthase"/>
    <property type="match status" value="1"/>
</dbReference>
<dbReference type="Gene3D" id="1.10.600.10">
    <property type="entry name" value="Farnesyl Diphosphate Synthase"/>
    <property type="match status" value="1"/>
</dbReference>
<dbReference type="InterPro" id="IPR008949">
    <property type="entry name" value="Isoprenoid_synthase_dom_sf"/>
</dbReference>
<dbReference type="InterPro" id="IPR002060">
    <property type="entry name" value="Squ/phyt_synthse"/>
</dbReference>
<dbReference type="InterPro" id="IPR019845">
    <property type="entry name" value="Squalene/phytoene_synthase_CS"/>
</dbReference>
<dbReference type="InterPro" id="IPR044843">
    <property type="entry name" value="Trans_IPPS_bact-type"/>
</dbReference>
<dbReference type="InterPro" id="IPR033904">
    <property type="entry name" value="Trans_IPPS_HH"/>
</dbReference>
<dbReference type="PANTHER" id="PTHR31480">
    <property type="entry name" value="BIFUNCTIONAL LYCOPENE CYCLASE/PHYTOENE SYNTHASE"/>
    <property type="match status" value="1"/>
</dbReference>
<dbReference type="Pfam" id="PF00494">
    <property type="entry name" value="SQS_PSY"/>
    <property type="match status" value="1"/>
</dbReference>
<dbReference type="SFLD" id="SFLDG01212">
    <property type="entry name" value="Phytoene_synthase_like"/>
    <property type="match status" value="1"/>
</dbReference>
<dbReference type="SFLD" id="SFLDG01018">
    <property type="entry name" value="Squalene/Phytoene_Synthase_Lik"/>
    <property type="match status" value="1"/>
</dbReference>
<dbReference type="SUPFAM" id="SSF48576">
    <property type="entry name" value="Terpenoid synthases"/>
    <property type="match status" value="1"/>
</dbReference>
<dbReference type="PROSITE" id="PS01044">
    <property type="entry name" value="SQUALEN_PHYTOEN_SYN_1"/>
    <property type="match status" value="1"/>
</dbReference>
<feature type="chain" id="PRO_0000282616" description="4,4'-diapophytoene synthase">
    <location>
        <begin position="1"/>
        <end position="287"/>
    </location>
</feature>
<feature type="binding site" evidence="1">
    <location>
        <begin position="18"/>
        <end position="21"/>
    </location>
    <ligand>
        <name>(2E,6E)-farnesyl diphosphate</name>
        <dbReference type="ChEBI" id="CHEBI:175763"/>
        <label>1</label>
    </ligand>
</feature>
<feature type="binding site" evidence="1">
    <location>
        <position position="41"/>
    </location>
    <ligand>
        <name>(2E,6E)-farnesyl diphosphate</name>
        <dbReference type="ChEBI" id="CHEBI:175763"/>
        <label>1</label>
    </ligand>
</feature>
<feature type="binding site" evidence="1">
    <location>
        <position position="45"/>
    </location>
    <ligand>
        <name>(2E,6E)-farnesyl diphosphate</name>
        <dbReference type="ChEBI" id="CHEBI:175763"/>
        <label>1</label>
    </ligand>
</feature>
<feature type="binding site" evidence="1">
    <location>
        <position position="45"/>
    </location>
    <ligand>
        <name>(2E,6E)-farnesyl diphosphate</name>
        <dbReference type="ChEBI" id="CHEBI:175763"/>
        <label>2</label>
    </ligand>
</feature>
<feature type="binding site" evidence="1">
    <location>
        <position position="48"/>
    </location>
    <ligand>
        <name>Mg(2+)</name>
        <dbReference type="ChEBI" id="CHEBI:18420"/>
        <label>1</label>
    </ligand>
</feature>
<feature type="binding site" evidence="1">
    <location>
        <position position="52"/>
    </location>
    <ligand>
        <name>Mg(2+)</name>
        <dbReference type="ChEBI" id="CHEBI:18420"/>
        <label>1</label>
    </ligand>
</feature>
<feature type="binding site" evidence="1">
    <location>
        <position position="165"/>
    </location>
    <ligand>
        <name>(2E,6E)-farnesyl diphosphate</name>
        <dbReference type="ChEBI" id="CHEBI:175763"/>
        <label>2</label>
    </ligand>
</feature>
<feature type="binding site" evidence="1">
    <location>
        <position position="168"/>
    </location>
    <ligand>
        <name>Mg(2+)</name>
        <dbReference type="ChEBI" id="CHEBI:18420"/>
        <label>2</label>
    </ligand>
</feature>
<feature type="binding site" evidence="1">
    <location>
        <position position="171"/>
    </location>
    <ligand>
        <name>(2E,6E)-farnesyl diphosphate</name>
        <dbReference type="ChEBI" id="CHEBI:175763"/>
        <label>1</label>
    </ligand>
</feature>
<feature type="binding site" evidence="1">
    <location>
        <position position="172"/>
    </location>
    <ligand>
        <name>Mg(2+)</name>
        <dbReference type="ChEBI" id="CHEBI:18420"/>
        <label>2</label>
    </ligand>
</feature>
<feature type="binding site" evidence="1">
    <location>
        <position position="248"/>
    </location>
    <ligand>
        <name>(2E,6E)-farnesyl diphosphate</name>
        <dbReference type="ChEBI" id="CHEBI:175763"/>
        <label>1</label>
    </ligand>
</feature>
<feature type="mutagenesis site" description="Decrease in C(30) carotene synthase activity. C(40) carotene synthase activity acquired." evidence="2 5">
    <original>F</original>
    <variation>A</variation>
    <variation>G</variation>
    <variation>L</variation>
    <variation>S</variation>
    <location>
        <position position="26"/>
    </location>
</feature>
<feature type="mutagenesis site" description="Decrease in C(30) and C(40) carotene synthase activities; when associated with A-38 or G-38." evidence="2 5">
    <original>F</original>
    <variation>A</variation>
    <location>
        <position position="26"/>
    </location>
</feature>
<feature type="mutagenesis site" description="Decrease in C(30) and C(40) carotene synthase activities; when associated with A-38 or G-38." evidence="2 5">
    <original>F</original>
    <variation>G</variation>
    <location>
        <position position="26"/>
    </location>
</feature>
<feature type="mutagenesis site" description="Decrease in C(30) and C(40) carotene synthase activities; when associated with A-26 or G-26." evidence="4 5">
    <original>W</original>
    <variation>A</variation>
    <location>
        <position position="38"/>
    </location>
</feature>
<feature type="mutagenesis site" description="Decrease in C(30) carotene synthase activity. C(40) carotene synthase activity acquired." evidence="4 5">
    <original>W</original>
    <variation>C</variation>
    <location>
        <position position="38"/>
    </location>
</feature>
<feature type="mutagenesis site" description="Decrease in C(30) and C(40) carotene synthase activities; when associated with A-26 or G-26." evidence="4 5">
    <original>W</original>
    <variation>G</variation>
    <location>
        <position position="38"/>
    </location>
</feature>
<feature type="mutagenesis site" description="Slight increase in C(30) carotene synthase activity. C(40) carotene synthase activity acquired." evidence="4 5">
    <original>E</original>
    <variation>G</variation>
    <location>
        <position position="180"/>
    </location>
</feature>
<evidence type="ECO:0000250" key="1">
    <source>
        <dbReference type="UniProtKB" id="A9JQL9"/>
    </source>
</evidence>
<evidence type="ECO:0000269" key="2">
    <source>
    </source>
</evidence>
<evidence type="ECO:0000269" key="3">
    <source>
    </source>
</evidence>
<evidence type="ECO:0000269" key="4">
    <source>
    </source>
</evidence>
<evidence type="ECO:0000269" key="5">
    <source>
    </source>
</evidence>
<evidence type="ECO:0000269" key="6">
    <source>
    </source>
</evidence>
<evidence type="ECO:0000269" key="7">
    <source>
    </source>
</evidence>
<evidence type="ECO:0000303" key="8">
    <source>
    </source>
</evidence>
<evidence type="ECO:0000303" key="9">
    <source>
    </source>
</evidence>
<evidence type="ECO:0000305" key="10"/>
<comment type="function">
    <text evidence="2 6 7">Involved in the biosynthesis of the yellow-orange carotenoid staphyloxanthin, which plays a role in the virulence via its protective function against oxidative stress. Catalyzes the head-to-head condensation of two molecules of farnesyl diphosphate (FPP) into the colorless C(30) carotenoid 4,4'-diapophytoene (dehydrosqualene).</text>
</comment>
<comment type="catalytic activity">
    <reaction evidence="2 6">
        <text>2 (2E,6E)-farnesyl diphosphate = 15-cis-4,4'-diapophytoene + 2 diphosphate</text>
        <dbReference type="Rhea" id="RHEA:31547"/>
        <dbReference type="ChEBI" id="CHEBI:33019"/>
        <dbReference type="ChEBI" id="CHEBI:62738"/>
        <dbReference type="ChEBI" id="CHEBI:175763"/>
        <dbReference type="EC" id="2.5.1.96"/>
    </reaction>
</comment>
<comment type="cofactor">
    <cofactor evidence="1">
        <name>Mg(2+)</name>
        <dbReference type="ChEBI" id="CHEBI:18420"/>
    </cofactor>
    <text evidence="1">Binds 2 Mg(2+) ions per subunit.</text>
</comment>
<comment type="biophysicochemical properties">
    <kinetics>
        <KM evidence="6">1.2 uM for farnesyl diphosphate</KM>
        <Vmax evidence="6">176.0 uM/h/mg enzyme</Vmax>
    </kinetics>
</comment>
<comment type="pathway">
    <text evidence="7">Carotenoid biosynthesis; staphyloxanthin biosynthesis; staphyloxanthin from farnesyl diphosphate: step 1/5.</text>
</comment>
<comment type="miscellaneous">
    <text evidence="2">CrtM is not functional in a C(40) pathway, however independent mutations on Phe-26, Trp-38 or Glu-180 are sufficient to permit the synthesis of C(40) carotenoids, such as lycopene and 3,4,3',4'-tetrahydrolycopene, although there is a decrease in the synthesis of C(30) compounds. The combination of mutations at Phe-26 and Trp-38 appears to be harmful for the general performance of the enzyme.</text>
</comment>
<comment type="miscellaneous">
    <text evidence="3">Upon coexpression with Erwinia geranylgeranyldiphosphate (GGDP) synthase, CrtM produces novel carotenoids with the asymmetrical C(35) backbone, such as 4-apophytoene, and the production of the natural product 4,4'-diapophytoene drops dramatically.</text>
</comment>
<comment type="similarity">
    <text evidence="10">Belongs to the phytoene/squalene synthase family. CrtM subfamily.</text>
</comment>
<accession>Q2FV59</accession>
<sequence>MTMMDMNFKYCHKIMKKHSKSFSYAFDLLPEDQRKAVWAIYAVCRKIDDSIDVYGDIQFLNQIKEDIQSIEKYPYEHHHFQSDRRIMMALQHVAQHKNIAFQSFYNLIDTVYKDQHFTMFETDAELFGYCYGVAGTVGEVLTPILSDHETHQTYDVARRLGESLQLINILRDVGEDFDNERIYFSKQRLKQYEVDIAEVYQNGVNNHYIDLWEYYAAIAEKDFQDVMDQIKVFSIEAQPIIELAARIYIEILDEVRQANYTLHERVFVDKRKKAKLFHEINSKYHRI</sequence>
<organism>
    <name type="scientific">Staphylococcus aureus (strain NCTC 8325 / PS 47)</name>
    <dbReference type="NCBI Taxonomy" id="93061"/>
    <lineage>
        <taxon>Bacteria</taxon>
        <taxon>Bacillati</taxon>
        <taxon>Bacillota</taxon>
        <taxon>Bacilli</taxon>
        <taxon>Bacillales</taxon>
        <taxon>Staphylococcaceae</taxon>
        <taxon>Staphylococcus</taxon>
    </lineage>
</organism>
<name>CRTM_STAA8</name>